<sequence length="263" mass="28831">MTLIDLANPTRFLALTARVLPWLAAATVILLAIGLYQSALAPDDYQQGATVKIMFIHVPNAWLSMFVWGVMSIASLGTLVWRHPLADVAAKAAAPIGAAFTFLALLTGSLWGRPMWGTYWEWDARLTSVLILFLMYLGLMALWRAVDDPSRAARAAAVLTLVGAINLPIIKFSVDWWNTLHQPASVMRMGGSSLDKSFLIPLLVMAIAFTLLFVTLHLAAMRNEILRRRVRSLQMMQASRMAFSSEMGAGSRQNNASNEVGAA</sequence>
<accession>P30962</accession>
<organism>
    <name type="scientific">Bradyrhizobium diazoefficiens (strain JCM 10833 / BCRC 13528 / IAM 13628 / NBRC 14792 / USDA 110)</name>
    <dbReference type="NCBI Taxonomy" id="224911"/>
    <lineage>
        <taxon>Bacteria</taxon>
        <taxon>Pseudomonadati</taxon>
        <taxon>Pseudomonadota</taxon>
        <taxon>Alphaproteobacteria</taxon>
        <taxon>Hyphomicrobiales</taxon>
        <taxon>Nitrobacteraceae</taxon>
        <taxon>Bradyrhizobium</taxon>
    </lineage>
</organism>
<proteinExistence type="inferred from homology"/>
<keyword id="KW-0997">Cell inner membrane</keyword>
<keyword id="KW-1003">Cell membrane</keyword>
<keyword id="KW-0201">Cytochrome c-type biogenesis</keyword>
<keyword id="KW-0472">Membrane</keyword>
<keyword id="KW-1185">Reference proteome</keyword>
<keyword id="KW-0812">Transmembrane</keyword>
<keyword id="KW-1133">Transmembrane helix</keyword>
<keyword id="KW-0813">Transport</keyword>
<comment type="function">
    <text>Required for the export of heme to the periplasm for the biogenesis of c-type cytochromes.</text>
</comment>
<comment type="subcellular location">
    <subcellularLocation>
        <location evidence="2">Cell inner membrane</location>
        <topology evidence="2">Multi-pass membrane protein</topology>
    </subcellularLocation>
</comment>
<comment type="similarity">
    <text evidence="2">Belongs to the CcmC/CycZ/HelC family.</text>
</comment>
<reference key="1">
    <citation type="journal article" date="1991" name="J. Biol. Chem.">
        <title>Discovery and sequence analysis of bacterial genes involved in the biogenesis of c-type cytochromes.</title>
        <authorList>
            <person name="Ramseier T.M."/>
            <person name="Winteler H.V."/>
            <person name="Hennecke H."/>
        </authorList>
    </citation>
    <scope>NUCLEOTIDE SEQUENCE [GENOMIC DNA]</scope>
    <source>
        <strain>USDA 110RIF15</strain>
    </source>
</reference>
<reference key="2">
    <citation type="journal article" date="2002" name="DNA Res.">
        <title>Complete genomic sequence of nitrogen-fixing symbiotic bacterium Bradyrhizobium japonicum USDA110.</title>
        <authorList>
            <person name="Kaneko T."/>
            <person name="Nakamura Y."/>
            <person name="Sato S."/>
            <person name="Minamisawa K."/>
            <person name="Uchiumi T."/>
            <person name="Sasamoto S."/>
            <person name="Watanabe A."/>
            <person name="Idesawa K."/>
            <person name="Iriguchi M."/>
            <person name="Kawashima K."/>
            <person name="Kohara M."/>
            <person name="Matsumoto M."/>
            <person name="Shimpo S."/>
            <person name="Tsuruoka H."/>
            <person name="Wada T."/>
            <person name="Yamada M."/>
            <person name="Tabata S."/>
        </authorList>
    </citation>
    <scope>NUCLEOTIDE SEQUENCE [LARGE SCALE GENOMIC DNA]</scope>
    <source>
        <strain>JCM 10833 / BCRC 13528 / IAM 13628 / NBRC 14792 / USDA 110</strain>
    </source>
</reference>
<gene>
    <name type="primary">cycZ</name>
    <name type="synonym">ccmC</name>
    <name type="ordered locus">blr0469</name>
</gene>
<evidence type="ECO:0000255" key="1"/>
<evidence type="ECO:0000305" key="2"/>
<feature type="chain" id="PRO_0000201556" description="Heme exporter protein C">
    <location>
        <begin position="1"/>
        <end position="263"/>
    </location>
</feature>
<feature type="transmembrane region" description="Helical" evidence="1">
    <location>
        <begin position="19"/>
        <end position="39"/>
    </location>
</feature>
<feature type="transmembrane region" description="Helical" evidence="1">
    <location>
        <begin position="61"/>
        <end position="81"/>
    </location>
</feature>
<feature type="transmembrane region" description="Helical" evidence="1">
    <location>
        <begin position="92"/>
        <end position="112"/>
    </location>
</feature>
<feature type="transmembrane region" description="Helical" evidence="1">
    <location>
        <begin position="126"/>
        <end position="146"/>
    </location>
</feature>
<feature type="transmembrane region" description="Helical" evidence="1">
    <location>
        <begin position="157"/>
        <end position="177"/>
    </location>
</feature>
<feature type="transmembrane region" description="Helical" evidence="1">
    <location>
        <begin position="198"/>
        <end position="218"/>
    </location>
</feature>
<protein>
    <recommendedName>
        <fullName>Heme exporter protein C</fullName>
    </recommendedName>
    <alternativeName>
        <fullName>Cytochrome c-type biogenesis protein CycZ</fullName>
    </alternativeName>
</protein>
<dbReference type="EMBL" id="M60874">
    <property type="protein sequence ID" value="AAA26194.1"/>
    <property type="molecule type" value="Genomic_DNA"/>
</dbReference>
<dbReference type="EMBL" id="BA000040">
    <property type="protein sequence ID" value="BAC45734.1"/>
    <property type="molecule type" value="Genomic_DNA"/>
</dbReference>
<dbReference type="PIR" id="C39741">
    <property type="entry name" value="C39741"/>
</dbReference>
<dbReference type="RefSeq" id="NP_767109.1">
    <property type="nucleotide sequence ID" value="NC_004463.1"/>
</dbReference>
<dbReference type="RefSeq" id="WP_011083300.1">
    <property type="nucleotide sequence ID" value="NC_004463.1"/>
</dbReference>
<dbReference type="SMR" id="P30962"/>
<dbReference type="FunCoup" id="P30962">
    <property type="interactions" value="362"/>
</dbReference>
<dbReference type="STRING" id="224911.AAV28_41595"/>
<dbReference type="TCDB" id="9.B.14.2.2">
    <property type="family name" value="the putative heme handling protein (hhp) family"/>
</dbReference>
<dbReference type="EnsemblBacteria" id="BAC45734">
    <property type="protein sequence ID" value="BAC45734"/>
    <property type="gene ID" value="BAC45734"/>
</dbReference>
<dbReference type="GeneID" id="46495615"/>
<dbReference type="KEGG" id="bja:blr0469"/>
<dbReference type="PATRIC" id="fig|224911.44.peg.9002"/>
<dbReference type="eggNOG" id="COG0755">
    <property type="taxonomic scope" value="Bacteria"/>
</dbReference>
<dbReference type="HOGENOM" id="CLU_066538_2_1_5"/>
<dbReference type="InParanoid" id="P30962"/>
<dbReference type="OrthoDB" id="9778550at2"/>
<dbReference type="PhylomeDB" id="P30962"/>
<dbReference type="Proteomes" id="UP000002526">
    <property type="component" value="Chromosome"/>
</dbReference>
<dbReference type="GO" id="GO:0005886">
    <property type="term" value="C:plasma membrane"/>
    <property type="evidence" value="ECO:0000318"/>
    <property type="project" value="GO_Central"/>
</dbReference>
<dbReference type="GO" id="GO:0020037">
    <property type="term" value="F:heme binding"/>
    <property type="evidence" value="ECO:0007669"/>
    <property type="project" value="InterPro"/>
</dbReference>
<dbReference type="GO" id="GO:0015232">
    <property type="term" value="F:heme transmembrane transporter activity"/>
    <property type="evidence" value="ECO:0007669"/>
    <property type="project" value="InterPro"/>
</dbReference>
<dbReference type="GO" id="GO:0017004">
    <property type="term" value="P:cytochrome complex assembly"/>
    <property type="evidence" value="ECO:0007669"/>
    <property type="project" value="UniProtKB-KW"/>
</dbReference>
<dbReference type="InterPro" id="IPR002541">
    <property type="entry name" value="Cyt_c_assembly"/>
</dbReference>
<dbReference type="InterPro" id="IPR003557">
    <property type="entry name" value="Cyt_c_biogenesis_CcmC"/>
</dbReference>
<dbReference type="InterPro" id="IPR045062">
    <property type="entry name" value="Cyt_c_biogenesis_CcsA/CcmC"/>
</dbReference>
<dbReference type="NCBIfam" id="TIGR01191">
    <property type="entry name" value="ccmC"/>
    <property type="match status" value="1"/>
</dbReference>
<dbReference type="PANTHER" id="PTHR30071:SF1">
    <property type="entry name" value="CYTOCHROME B_B6 PROTEIN-RELATED"/>
    <property type="match status" value="1"/>
</dbReference>
<dbReference type="PANTHER" id="PTHR30071">
    <property type="entry name" value="HEME EXPORTER PROTEIN C"/>
    <property type="match status" value="1"/>
</dbReference>
<dbReference type="Pfam" id="PF01578">
    <property type="entry name" value="Cytochrom_C_asm"/>
    <property type="match status" value="1"/>
</dbReference>
<dbReference type="PRINTS" id="PR01386">
    <property type="entry name" value="CCMCBIOGNSIS"/>
</dbReference>
<name>CCMC_BRADU</name>